<organism>
    <name type="scientific">Bos taurus</name>
    <name type="common">Bovine</name>
    <dbReference type="NCBI Taxonomy" id="9913"/>
    <lineage>
        <taxon>Eukaryota</taxon>
        <taxon>Metazoa</taxon>
        <taxon>Chordata</taxon>
        <taxon>Craniata</taxon>
        <taxon>Vertebrata</taxon>
        <taxon>Euteleostomi</taxon>
        <taxon>Mammalia</taxon>
        <taxon>Eutheria</taxon>
        <taxon>Laurasiatheria</taxon>
        <taxon>Artiodactyla</taxon>
        <taxon>Ruminantia</taxon>
        <taxon>Pecora</taxon>
        <taxon>Bovidae</taxon>
        <taxon>Bovinae</taxon>
        <taxon>Bos</taxon>
    </lineage>
</organism>
<proteinExistence type="evidence at transcript level"/>
<name>ORML3_BOVIN</name>
<protein>
    <recommendedName>
        <fullName>ORM1-like protein 3</fullName>
    </recommendedName>
</protein>
<accession>Q0VD15</accession>
<gene>
    <name type="primary">ORMDL3</name>
</gene>
<feature type="chain" id="PRO_0000394252" description="ORM1-like protein 3">
    <location>
        <begin position="1"/>
        <end position="153"/>
    </location>
</feature>
<feature type="topological domain" description="Cytoplasmic" evidence="1 2">
    <location>
        <begin position="1"/>
        <end position="21"/>
    </location>
</feature>
<feature type="transmembrane region" description="Helical" evidence="1 2">
    <location>
        <begin position="22"/>
        <end position="42"/>
    </location>
</feature>
<feature type="transmembrane region" description="Helical" evidence="1 2">
    <location>
        <begin position="43"/>
        <end position="63"/>
    </location>
</feature>
<feature type="topological domain" description="Cytoplasmic" evidence="1 2">
    <location>
        <begin position="64"/>
        <end position="94"/>
    </location>
</feature>
<feature type="transmembrane region" description="Helical" evidence="1 2">
    <location>
        <begin position="95"/>
        <end position="117"/>
    </location>
</feature>
<feature type="topological domain" description="Extracellular" evidence="1 2">
    <location>
        <begin position="118"/>
        <end position="121"/>
    </location>
</feature>
<feature type="transmembrane region" description="Helical" evidence="1 2">
    <location>
        <begin position="122"/>
        <end position="142"/>
    </location>
</feature>
<feature type="topological domain" description="Cytoplasmic" evidence="1 2">
    <location>
        <begin position="143"/>
        <end position="153"/>
    </location>
</feature>
<feature type="region of interest" description="Important for ceramide level-sensing" evidence="1">
    <location>
        <begin position="1"/>
        <end position="17"/>
    </location>
</feature>
<feature type="modified residue" description="Hydroxyproline" evidence="1">
    <location>
        <position position="137"/>
    </location>
</feature>
<evidence type="ECO:0000250" key="1">
    <source>
        <dbReference type="UniProtKB" id="Q8N138"/>
    </source>
</evidence>
<evidence type="ECO:0000255" key="2"/>
<evidence type="ECO:0000305" key="3"/>
<reference key="1">
    <citation type="submission" date="2006-08" db="EMBL/GenBank/DDBJ databases">
        <authorList>
            <consortium name="NIH - Mammalian Gene Collection (MGC) project"/>
        </authorList>
    </citation>
    <scope>NUCLEOTIDE SEQUENCE [LARGE SCALE MRNA]</scope>
    <source>
        <strain>Hereford</strain>
        <tissue>Thalamus</tissue>
    </source>
</reference>
<keyword id="KW-0256">Endoplasmic reticulum</keyword>
<keyword id="KW-0379">Hydroxylation</keyword>
<keyword id="KW-0472">Membrane</keyword>
<keyword id="KW-1185">Reference proteome</keyword>
<keyword id="KW-0812">Transmembrane</keyword>
<keyword id="KW-1133">Transmembrane helix</keyword>
<keyword id="KW-0832">Ubl conjugation</keyword>
<comment type="function">
    <text evidence="1">Plays an essential role in the homeostatic regulation of sphingolipid de novo biosynthesis by modulating the activity of the serine palmitoyltransferase (SPT) in response to ceramide levels. When complexed to SPT, the binding of ceramides to its N-terminus stabilizes a conformation that block SPT substrate entry, hence preventing SPT catalytic activity. Through this mechanism, maintains ceramide levels at sufficient concentrations for the production of complex sphingolipids, but which prevents the accumulation of ceramides to levels that trigger apoptosis.</text>
</comment>
<comment type="subunit">
    <text evidence="1">Ceramide-sensitive subunit of the serine palmitoyltransferase (SPT) complex, which is also composed of SPTLC1, SPTLC2/3 and SPTSSA/B.</text>
</comment>
<comment type="subcellular location">
    <subcellularLocation>
        <location evidence="1">Endoplasmic reticulum membrane</location>
        <topology evidence="1">Multi-pass membrane protein</topology>
    </subcellularLocation>
</comment>
<comment type="domain">
    <text evidence="1">Ceramides bind to ORMDL3 N-terminus and stabilize it in a conformation that physically restricts the accessibility of the substrates to their binding sites in the serine palmitoyltransferase (SPT) complex, hence inhibiting SPT catalytic activity. In the absence of ceramides, the N-terminus is flexible and permits substrate binding, thus liberating SPT from inhibition.</text>
</comment>
<comment type="PTM">
    <text evidence="1">When hydroxylated at Pro-137, ubiquitinated via 'Lys-48'-linkage, leading to proteasomal degradation. In endothelial cells, ORMDL3 proteasomal degradation is controlled by the sphingosine 1-phosphate receptor signaling pathway.</text>
</comment>
<comment type="similarity">
    <text evidence="3">Belongs to the ORM family.</text>
</comment>
<sequence>MNVGTAHSEVNPNTRVMNSRGIWLSYVLAIGLLHVVLLSIPFVSVPVVWTLTNLIHNMGMYIFLHTVKGTPFETPDQGKARLLTHWEQMDYGVQFTASRKFLTITPIVLYFLTSFYTKYDQIHFILNTVSLMSVLIPKLPQLHGVRIFGINKY</sequence>
<dbReference type="EMBL" id="BC119888">
    <property type="protein sequence ID" value="AAI19889.1"/>
    <property type="molecule type" value="mRNA"/>
</dbReference>
<dbReference type="RefSeq" id="NP_001069835.1">
    <property type="nucleotide sequence ID" value="NM_001076367.1"/>
</dbReference>
<dbReference type="RefSeq" id="XP_005220811.1">
    <property type="nucleotide sequence ID" value="XM_005220754.5"/>
</dbReference>
<dbReference type="RefSeq" id="XP_005220812.1">
    <property type="nucleotide sequence ID" value="XM_005220755.5"/>
</dbReference>
<dbReference type="RefSeq" id="XP_024836193.1">
    <property type="nucleotide sequence ID" value="XM_024980425.2"/>
</dbReference>
<dbReference type="SMR" id="Q0VD15"/>
<dbReference type="FunCoup" id="Q0VD15">
    <property type="interactions" value="1567"/>
</dbReference>
<dbReference type="STRING" id="9913.ENSBTAP00000018402"/>
<dbReference type="PaxDb" id="9913-ENSBTAP00000018402"/>
<dbReference type="GeneID" id="615368"/>
<dbReference type="KEGG" id="bta:615368"/>
<dbReference type="CTD" id="94103"/>
<dbReference type="VEuPathDB" id="HostDB:ENSBTAG00000013855"/>
<dbReference type="eggNOG" id="KOG3319">
    <property type="taxonomic scope" value="Eukaryota"/>
</dbReference>
<dbReference type="HOGENOM" id="CLU_072117_3_0_1"/>
<dbReference type="InParanoid" id="Q0VD15"/>
<dbReference type="OMA" id="WTAYILI"/>
<dbReference type="OrthoDB" id="1932233at2759"/>
<dbReference type="TreeFam" id="TF323369"/>
<dbReference type="Reactome" id="R-BTA-1660661">
    <property type="pathway name" value="Sphingolipid de novo biosynthesis"/>
</dbReference>
<dbReference type="Reactome" id="R-BTA-6798695">
    <property type="pathway name" value="Neutrophil degranulation"/>
</dbReference>
<dbReference type="Proteomes" id="UP000009136">
    <property type="component" value="Chromosome 19"/>
</dbReference>
<dbReference type="Bgee" id="ENSBTAG00000013855">
    <property type="expression patterns" value="Expressed in subcutaneous adipose tissue and 107 other cell types or tissues"/>
</dbReference>
<dbReference type="GO" id="GO:0005783">
    <property type="term" value="C:endoplasmic reticulum"/>
    <property type="evidence" value="ECO:0000250"/>
    <property type="project" value="UniProtKB"/>
</dbReference>
<dbReference type="GO" id="GO:0005789">
    <property type="term" value="C:endoplasmic reticulum membrane"/>
    <property type="evidence" value="ECO:0007669"/>
    <property type="project" value="UniProtKB-SubCell"/>
</dbReference>
<dbReference type="GO" id="GO:0017059">
    <property type="term" value="C:serine palmitoyltransferase complex"/>
    <property type="evidence" value="ECO:0000250"/>
    <property type="project" value="UniProtKB"/>
</dbReference>
<dbReference type="GO" id="GO:0006672">
    <property type="term" value="P:ceramide metabolic process"/>
    <property type="evidence" value="ECO:0000250"/>
    <property type="project" value="UniProtKB"/>
</dbReference>
<dbReference type="GO" id="GO:0090156">
    <property type="term" value="P:intracellular sphingolipid homeostasis"/>
    <property type="evidence" value="ECO:0000318"/>
    <property type="project" value="GO_Central"/>
</dbReference>
<dbReference type="GO" id="GO:2000303">
    <property type="term" value="P:regulation of ceramide biosynthetic process"/>
    <property type="evidence" value="ECO:0007669"/>
    <property type="project" value="UniProtKB-ARBA"/>
</dbReference>
<dbReference type="GO" id="GO:0030148">
    <property type="term" value="P:sphingolipid biosynthetic process"/>
    <property type="evidence" value="ECO:0000318"/>
    <property type="project" value="GO_Central"/>
</dbReference>
<dbReference type="InterPro" id="IPR007203">
    <property type="entry name" value="ORMDL"/>
</dbReference>
<dbReference type="PANTHER" id="PTHR12665">
    <property type="entry name" value="ORMDL PROTEINS"/>
    <property type="match status" value="1"/>
</dbReference>
<dbReference type="Pfam" id="PF04061">
    <property type="entry name" value="ORMDL"/>
    <property type="match status" value="1"/>
</dbReference>
<dbReference type="PIRSF" id="PIRSF018147">
    <property type="entry name" value="ORMDL"/>
    <property type="match status" value="1"/>
</dbReference>